<accession>P56120</accession>
<dbReference type="EC" id="3.1.26.4"/>
<dbReference type="EMBL" id="AE000511">
    <property type="protein sequence ID" value="AAD07724.1"/>
    <property type="molecule type" value="Genomic_DNA"/>
</dbReference>
<dbReference type="PIR" id="E64602">
    <property type="entry name" value="E64602"/>
</dbReference>
<dbReference type="RefSeq" id="NP_207455.1">
    <property type="nucleotide sequence ID" value="NC_000915.1"/>
</dbReference>
<dbReference type="SMR" id="P56120"/>
<dbReference type="FunCoup" id="P56120">
    <property type="interactions" value="157"/>
</dbReference>
<dbReference type="IntAct" id="P56120">
    <property type="interactions" value="18"/>
</dbReference>
<dbReference type="MINT" id="P56120"/>
<dbReference type="STRING" id="85962.HP_0661"/>
<dbReference type="PaxDb" id="85962-C694_03420"/>
<dbReference type="EnsemblBacteria" id="AAD07724">
    <property type="protein sequence ID" value="AAD07724"/>
    <property type="gene ID" value="HP_0661"/>
</dbReference>
<dbReference type="KEGG" id="heo:C694_03420"/>
<dbReference type="KEGG" id="hpy:HP_0661"/>
<dbReference type="PATRIC" id="fig|85962.47.peg.711"/>
<dbReference type="eggNOG" id="COG0328">
    <property type="taxonomic scope" value="Bacteria"/>
</dbReference>
<dbReference type="InParanoid" id="P56120"/>
<dbReference type="OrthoDB" id="7845843at2"/>
<dbReference type="PhylomeDB" id="P56120"/>
<dbReference type="Proteomes" id="UP000000429">
    <property type="component" value="Chromosome"/>
</dbReference>
<dbReference type="GO" id="GO:0005737">
    <property type="term" value="C:cytoplasm"/>
    <property type="evidence" value="ECO:0007669"/>
    <property type="project" value="UniProtKB-SubCell"/>
</dbReference>
<dbReference type="GO" id="GO:0000287">
    <property type="term" value="F:magnesium ion binding"/>
    <property type="evidence" value="ECO:0007669"/>
    <property type="project" value="UniProtKB-UniRule"/>
</dbReference>
<dbReference type="GO" id="GO:0003676">
    <property type="term" value="F:nucleic acid binding"/>
    <property type="evidence" value="ECO:0007669"/>
    <property type="project" value="InterPro"/>
</dbReference>
<dbReference type="GO" id="GO:0004523">
    <property type="term" value="F:RNA-DNA hybrid ribonuclease activity"/>
    <property type="evidence" value="ECO:0000318"/>
    <property type="project" value="GO_Central"/>
</dbReference>
<dbReference type="GO" id="GO:0043137">
    <property type="term" value="P:DNA replication, removal of RNA primer"/>
    <property type="evidence" value="ECO:0000318"/>
    <property type="project" value="GO_Central"/>
</dbReference>
<dbReference type="CDD" id="cd09278">
    <property type="entry name" value="RNase_HI_prokaryote_like"/>
    <property type="match status" value="1"/>
</dbReference>
<dbReference type="FunFam" id="3.30.420.10:FF:000089">
    <property type="entry name" value="Ribonuclease H"/>
    <property type="match status" value="1"/>
</dbReference>
<dbReference type="Gene3D" id="3.30.420.10">
    <property type="entry name" value="Ribonuclease H-like superfamily/Ribonuclease H"/>
    <property type="match status" value="1"/>
</dbReference>
<dbReference type="HAMAP" id="MF_00042">
    <property type="entry name" value="RNase_H"/>
    <property type="match status" value="1"/>
</dbReference>
<dbReference type="InterPro" id="IPR050092">
    <property type="entry name" value="RNase_H"/>
</dbReference>
<dbReference type="InterPro" id="IPR012337">
    <property type="entry name" value="RNaseH-like_sf"/>
</dbReference>
<dbReference type="InterPro" id="IPR002156">
    <property type="entry name" value="RNaseH_domain"/>
</dbReference>
<dbReference type="InterPro" id="IPR036397">
    <property type="entry name" value="RNaseH_sf"/>
</dbReference>
<dbReference type="InterPro" id="IPR022892">
    <property type="entry name" value="RNaseHI"/>
</dbReference>
<dbReference type="NCBIfam" id="NF001236">
    <property type="entry name" value="PRK00203.1"/>
    <property type="match status" value="1"/>
</dbReference>
<dbReference type="PANTHER" id="PTHR10642">
    <property type="entry name" value="RIBONUCLEASE H1"/>
    <property type="match status" value="1"/>
</dbReference>
<dbReference type="PANTHER" id="PTHR10642:SF26">
    <property type="entry name" value="RIBONUCLEASE H1"/>
    <property type="match status" value="1"/>
</dbReference>
<dbReference type="Pfam" id="PF00075">
    <property type="entry name" value="RNase_H"/>
    <property type="match status" value="1"/>
</dbReference>
<dbReference type="SUPFAM" id="SSF53098">
    <property type="entry name" value="Ribonuclease H-like"/>
    <property type="match status" value="1"/>
</dbReference>
<dbReference type="PROSITE" id="PS50879">
    <property type="entry name" value="RNASE_H_1"/>
    <property type="match status" value="1"/>
</dbReference>
<name>RNH_HELPY</name>
<gene>
    <name type="primary">rnhA</name>
    <name type="ordered locus">HP_0661</name>
</gene>
<keyword id="KW-0963">Cytoplasm</keyword>
<keyword id="KW-0255">Endonuclease</keyword>
<keyword id="KW-0378">Hydrolase</keyword>
<keyword id="KW-0460">Magnesium</keyword>
<keyword id="KW-0479">Metal-binding</keyword>
<keyword id="KW-0540">Nuclease</keyword>
<keyword id="KW-1185">Reference proteome</keyword>
<organism>
    <name type="scientific">Helicobacter pylori (strain ATCC 700392 / 26695)</name>
    <name type="common">Campylobacter pylori</name>
    <dbReference type="NCBI Taxonomy" id="85962"/>
    <lineage>
        <taxon>Bacteria</taxon>
        <taxon>Pseudomonadati</taxon>
        <taxon>Campylobacterota</taxon>
        <taxon>Epsilonproteobacteria</taxon>
        <taxon>Campylobacterales</taxon>
        <taxon>Helicobacteraceae</taxon>
        <taxon>Helicobacter</taxon>
    </lineage>
</organism>
<comment type="function">
    <text evidence="1">Endonuclease that specifically degrades the RNA of RNA-DNA hybrids.</text>
</comment>
<comment type="catalytic activity">
    <reaction>
        <text>Endonucleolytic cleavage to 5'-phosphomonoester.</text>
        <dbReference type="EC" id="3.1.26.4"/>
    </reaction>
</comment>
<comment type="cofactor">
    <cofactor evidence="1">
        <name>Mg(2+)</name>
        <dbReference type="ChEBI" id="CHEBI:18420"/>
    </cofactor>
    <text evidence="1">Binds 1 Mg(2+) ion per subunit. May bind a second metal ion at a regulatory site, or after substrate binding.</text>
</comment>
<comment type="subunit">
    <text evidence="1">Monomer.</text>
</comment>
<comment type="subcellular location">
    <subcellularLocation>
        <location evidence="3">Cytoplasm</location>
    </subcellularLocation>
</comment>
<comment type="similarity">
    <text evidence="3">Belongs to the RNase H family.</text>
</comment>
<protein>
    <recommendedName>
        <fullName>Ribonuclease HI</fullName>
        <shortName>RNase HI</shortName>
        <ecNumber>3.1.26.4</ecNumber>
    </recommendedName>
</protein>
<proteinExistence type="inferred from homology"/>
<sequence length="143" mass="16247">MQEIEIFCDGSSLGNPGPGGYAAILRYKDKEKTISGGEEFTTNNRMELRALNEALKILKRPCRITLYSDSQYVCQAINVWLANWQKKNFSKVKNVDLWKEFLEVSKGHSIVAVWIKGHNGHAENERCDSLAKLEAQKRVKTTT</sequence>
<reference key="1">
    <citation type="journal article" date="1997" name="Nature">
        <title>The complete genome sequence of the gastric pathogen Helicobacter pylori.</title>
        <authorList>
            <person name="Tomb J.-F."/>
            <person name="White O."/>
            <person name="Kerlavage A.R."/>
            <person name="Clayton R.A."/>
            <person name="Sutton G.G."/>
            <person name="Fleischmann R.D."/>
            <person name="Ketchum K.A."/>
            <person name="Klenk H.-P."/>
            <person name="Gill S.R."/>
            <person name="Dougherty B.A."/>
            <person name="Nelson K.E."/>
            <person name="Quackenbush J."/>
            <person name="Zhou L."/>
            <person name="Kirkness E.F."/>
            <person name="Peterson S.N."/>
            <person name="Loftus B.J."/>
            <person name="Richardson D.L."/>
            <person name="Dodson R.J."/>
            <person name="Khalak H.G."/>
            <person name="Glodek A."/>
            <person name="McKenney K."/>
            <person name="FitzGerald L.M."/>
            <person name="Lee N."/>
            <person name="Adams M.D."/>
            <person name="Hickey E.K."/>
            <person name="Berg D.E."/>
            <person name="Gocayne J.D."/>
            <person name="Utterback T.R."/>
            <person name="Peterson J.D."/>
            <person name="Kelley J.M."/>
            <person name="Cotton M.D."/>
            <person name="Weidman J.F."/>
            <person name="Fujii C."/>
            <person name="Bowman C."/>
            <person name="Watthey L."/>
            <person name="Wallin E."/>
            <person name="Hayes W.S."/>
            <person name="Borodovsky M."/>
            <person name="Karp P.D."/>
            <person name="Smith H.O."/>
            <person name="Fraser C.M."/>
            <person name="Venter J.C."/>
        </authorList>
    </citation>
    <scope>NUCLEOTIDE SEQUENCE [LARGE SCALE GENOMIC DNA]</scope>
    <source>
        <strain>ATCC 700392 / 26695</strain>
    </source>
</reference>
<evidence type="ECO:0000250" key="1"/>
<evidence type="ECO:0000255" key="2">
    <source>
        <dbReference type="PROSITE-ProRule" id="PRU00408"/>
    </source>
</evidence>
<evidence type="ECO:0000305" key="3"/>
<feature type="chain" id="PRO_0000195379" description="Ribonuclease HI">
    <location>
        <begin position="1"/>
        <end position="143"/>
    </location>
</feature>
<feature type="domain" description="RNase H type-1" evidence="2">
    <location>
        <begin position="1"/>
        <end position="136"/>
    </location>
</feature>
<feature type="binding site" evidence="1">
    <location>
        <position position="9"/>
    </location>
    <ligand>
        <name>Mg(2+)</name>
        <dbReference type="ChEBI" id="CHEBI:18420"/>
        <label>1</label>
    </ligand>
</feature>
<feature type="binding site" evidence="1">
    <location>
        <position position="9"/>
    </location>
    <ligand>
        <name>Mg(2+)</name>
        <dbReference type="ChEBI" id="CHEBI:18420"/>
        <label>2</label>
    </ligand>
</feature>
<feature type="binding site" evidence="1">
    <location>
        <position position="47"/>
    </location>
    <ligand>
        <name>Mg(2+)</name>
        <dbReference type="ChEBI" id="CHEBI:18420"/>
        <label>1</label>
    </ligand>
</feature>
<feature type="binding site" evidence="1">
    <location>
        <position position="69"/>
    </location>
    <ligand>
        <name>Mg(2+)</name>
        <dbReference type="ChEBI" id="CHEBI:18420"/>
        <label>1</label>
    </ligand>
</feature>
<feature type="binding site" evidence="1">
    <location>
        <position position="128"/>
    </location>
    <ligand>
        <name>Mg(2+)</name>
        <dbReference type="ChEBI" id="CHEBI:18420"/>
        <label>2</label>
    </ligand>
</feature>